<evidence type="ECO:0000255" key="1">
    <source>
        <dbReference type="HAMAP-Rule" id="MF_00367"/>
    </source>
</evidence>
<evidence type="ECO:0000255" key="2">
    <source>
        <dbReference type="PROSITE-ProRule" id="PRU01050"/>
    </source>
</evidence>
<organism>
    <name type="scientific">Shigella flexneri serotype 5b (strain 8401)</name>
    <dbReference type="NCBI Taxonomy" id="373384"/>
    <lineage>
        <taxon>Bacteria</taxon>
        <taxon>Pseudomonadati</taxon>
        <taxon>Pseudomonadota</taxon>
        <taxon>Gammaproteobacteria</taxon>
        <taxon>Enterobacterales</taxon>
        <taxon>Enterobacteriaceae</taxon>
        <taxon>Shigella</taxon>
    </lineage>
</organism>
<keyword id="KW-0997">Cell inner membrane</keyword>
<keyword id="KW-1003">Cell membrane</keyword>
<keyword id="KW-0963">Cytoplasm</keyword>
<keyword id="KW-0342">GTP-binding</keyword>
<keyword id="KW-0472">Membrane</keyword>
<keyword id="KW-0547">Nucleotide-binding</keyword>
<keyword id="KW-0690">Ribosome biogenesis</keyword>
<keyword id="KW-0694">RNA-binding</keyword>
<keyword id="KW-0699">rRNA-binding</keyword>
<feature type="chain" id="PRO_1000079736" description="GTPase Era">
    <location>
        <begin position="1"/>
        <end position="301"/>
    </location>
</feature>
<feature type="domain" description="Era-type G" evidence="2">
    <location>
        <begin position="7"/>
        <end position="175"/>
    </location>
</feature>
<feature type="domain" description="KH type-2" evidence="1">
    <location>
        <begin position="206"/>
        <end position="283"/>
    </location>
</feature>
<feature type="region of interest" description="G1" evidence="2">
    <location>
        <begin position="15"/>
        <end position="22"/>
    </location>
</feature>
<feature type="region of interest" description="G2" evidence="2">
    <location>
        <begin position="41"/>
        <end position="45"/>
    </location>
</feature>
<feature type="region of interest" description="G3" evidence="2">
    <location>
        <begin position="62"/>
        <end position="65"/>
    </location>
</feature>
<feature type="region of interest" description="G4" evidence="2">
    <location>
        <begin position="124"/>
        <end position="127"/>
    </location>
</feature>
<feature type="region of interest" description="G5" evidence="2">
    <location>
        <begin position="154"/>
        <end position="156"/>
    </location>
</feature>
<feature type="binding site" evidence="1">
    <location>
        <begin position="15"/>
        <end position="22"/>
    </location>
    <ligand>
        <name>GTP</name>
        <dbReference type="ChEBI" id="CHEBI:37565"/>
    </ligand>
</feature>
<feature type="binding site" evidence="1">
    <location>
        <begin position="62"/>
        <end position="66"/>
    </location>
    <ligand>
        <name>GTP</name>
        <dbReference type="ChEBI" id="CHEBI:37565"/>
    </ligand>
</feature>
<feature type="binding site" evidence="1">
    <location>
        <begin position="124"/>
        <end position="127"/>
    </location>
    <ligand>
        <name>GTP</name>
        <dbReference type="ChEBI" id="CHEBI:37565"/>
    </ligand>
</feature>
<comment type="function">
    <text evidence="1">An essential GTPase that binds both GDP and GTP, with rapid nucleotide exchange. Plays a role in 16S rRNA processing and 30S ribosomal subunit biogenesis and possibly also in cell cycle regulation and energy metabolism.</text>
</comment>
<comment type="subunit">
    <text evidence="1">Monomer.</text>
</comment>
<comment type="subcellular location">
    <subcellularLocation>
        <location>Cytoplasm</location>
    </subcellularLocation>
    <subcellularLocation>
        <location evidence="1">Cell inner membrane</location>
        <topology evidence="1">Peripheral membrane protein</topology>
    </subcellularLocation>
</comment>
<comment type="similarity">
    <text evidence="1 2">Belongs to the TRAFAC class TrmE-Era-EngA-EngB-Septin-like GTPase superfamily. Era GTPase family.</text>
</comment>
<reference key="1">
    <citation type="journal article" date="2006" name="BMC Genomics">
        <title>Complete genome sequence of Shigella flexneri 5b and comparison with Shigella flexneri 2a.</title>
        <authorList>
            <person name="Nie H."/>
            <person name="Yang F."/>
            <person name="Zhang X."/>
            <person name="Yang J."/>
            <person name="Chen L."/>
            <person name="Wang J."/>
            <person name="Xiong Z."/>
            <person name="Peng J."/>
            <person name="Sun L."/>
            <person name="Dong J."/>
            <person name="Xue Y."/>
            <person name="Xu X."/>
            <person name="Chen S."/>
            <person name="Yao Z."/>
            <person name="Shen Y."/>
            <person name="Jin Q."/>
        </authorList>
    </citation>
    <scope>NUCLEOTIDE SEQUENCE [LARGE SCALE GENOMIC DNA]</scope>
    <source>
        <strain>8401</strain>
    </source>
</reference>
<protein>
    <recommendedName>
        <fullName evidence="1">GTPase Era</fullName>
    </recommendedName>
</protein>
<proteinExistence type="inferred from homology"/>
<name>ERA_SHIF8</name>
<dbReference type="EMBL" id="CP000266">
    <property type="protein sequence ID" value="ABF04726.1"/>
    <property type="molecule type" value="Genomic_DNA"/>
</dbReference>
<dbReference type="RefSeq" id="WP_000020745.1">
    <property type="nucleotide sequence ID" value="NC_008258.1"/>
</dbReference>
<dbReference type="SMR" id="Q0T1T9"/>
<dbReference type="KEGG" id="sfv:SFV_2629"/>
<dbReference type="HOGENOM" id="CLU_038009_1_2_6"/>
<dbReference type="Proteomes" id="UP000000659">
    <property type="component" value="Chromosome"/>
</dbReference>
<dbReference type="GO" id="GO:0005829">
    <property type="term" value="C:cytosol"/>
    <property type="evidence" value="ECO:0007669"/>
    <property type="project" value="TreeGrafter"/>
</dbReference>
<dbReference type="GO" id="GO:0005886">
    <property type="term" value="C:plasma membrane"/>
    <property type="evidence" value="ECO:0007669"/>
    <property type="project" value="UniProtKB-SubCell"/>
</dbReference>
<dbReference type="GO" id="GO:0005525">
    <property type="term" value="F:GTP binding"/>
    <property type="evidence" value="ECO:0007669"/>
    <property type="project" value="UniProtKB-UniRule"/>
</dbReference>
<dbReference type="GO" id="GO:0003924">
    <property type="term" value="F:GTPase activity"/>
    <property type="evidence" value="ECO:0007669"/>
    <property type="project" value="UniProtKB-UniRule"/>
</dbReference>
<dbReference type="GO" id="GO:0043024">
    <property type="term" value="F:ribosomal small subunit binding"/>
    <property type="evidence" value="ECO:0007669"/>
    <property type="project" value="TreeGrafter"/>
</dbReference>
<dbReference type="GO" id="GO:0070181">
    <property type="term" value="F:small ribosomal subunit rRNA binding"/>
    <property type="evidence" value="ECO:0007669"/>
    <property type="project" value="UniProtKB-UniRule"/>
</dbReference>
<dbReference type="GO" id="GO:0000028">
    <property type="term" value="P:ribosomal small subunit assembly"/>
    <property type="evidence" value="ECO:0007669"/>
    <property type="project" value="TreeGrafter"/>
</dbReference>
<dbReference type="CDD" id="cd04163">
    <property type="entry name" value="Era"/>
    <property type="match status" value="1"/>
</dbReference>
<dbReference type="CDD" id="cd22534">
    <property type="entry name" value="KH-II_Era"/>
    <property type="match status" value="1"/>
</dbReference>
<dbReference type="FunFam" id="3.30.300.20:FF:000003">
    <property type="entry name" value="GTPase Era"/>
    <property type="match status" value="1"/>
</dbReference>
<dbReference type="FunFam" id="3.40.50.300:FF:000094">
    <property type="entry name" value="GTPase Era"/>
    <property type="match status" value="1"/>
</dbReference>
<dbReference type="Gene3D" id="3.30.300.20">
    <property type="match status" value="1"/>
</dbReference>
<dbReference type="Gene3D" id="3.40.50.300">
    <property type="entry name" value="P-loop containing nucleotide triphosphate hydrolases"/>
    <property type="match status" value="1"/>
</dbReference>
<dbReference type="HAMAP" id="MF_00367">
    <property type="entry name" value="GTPase_Era"/>
    <property type="match status" value="1"/>
</dbReference>
<dbReference type="InterPro" id="IPR030388">
    <property type="entry name" value="G_ERA_dom"/>
</dbReference>
<dbReference type="InterPro" id="IPR006073">
    <property type="entry name" value="GTP-bd"/>
</dbReference>
<dbReference type="InterPro" id="IPR005662">
    <property type="entry name" value="GTPase_Era-like"/>
</dbReference>
<dbReference type="InterPro" id="IPR015946">
    <property type="entry name" value="KH_dom-like_a/b"/>
</dbReference>
<dbReference type="InterPro" id="IPR004044">
    <property type="entry name" value="KH_dom_type_2"/>
</dbReference>
<dbReference type="InterPro" id="IPR009019">
    <property type="entry name" value="KH_sf_prok-type"/>
</dbReference>
<dbReference type="InterPro" id="IPR027417">
    <property type="entry name" value="P-loop_NTPase"/>
</dbReference>
<dbReference type="InterPro" id="IPR005225">
    <property type="entry name" value="Small_GTP-bd"/>
</dbReference>
<dbReference type="NCBIfam" id="TIGR00436">
    <property type="entry name" value="era"/>
    <property type="match status" value="1"/>
</dbReference>
<dbReference type="NCBIfam" id="NF000908">
    <property type="entry name" value="PRK00089.1"/>
    <property type="match status" value="1"/>
</dbReference>
<dbReference type="NCBIfam" id="TIGR00231">
    <property type="entry name" value="small_GTP"/>
    <property type="match status" value="1"/>
</dbReference>
<dbReference type="PANTHER" id="PTHR42698">
    <property type="entry name" value="GTPASE ERA"/>
    <property type="match status" value="1"/>
</dbReference>
<dbReference type="PANTHER" id="PTHR42698:SF1">
    <property type="entry name" value="GTPASE ERA, MITOCHONDRIAL"/>
    <property type="match status" value="1"/>
</dbReference>
<dbReference type="Pfam" id="PF07650">
    <property type="entry name" value="KH_2"/>
    <property type="match status" value="1"/>
</dbReference>
<dbReference type="Pfam" id="PF01926">
    <property type="entry name" value="MMR_HSR1"/>
    <property type="match status" value="1"/>
</dbReference>
<dbReference type="SUPFAM" id="SSF52540">
    <property type="entry name" value="P-loop containing nucleoside triphosphate hydrolases"/>
    <property type="match status" value="1"/>
</dbReference>
<dbReference type="SUPFAM" id="SSF54814">
    <property type="entry name" value="Prokaryotic type KH domain (KH-domain type II)"/>
    <property type="match status" value="1"/>
</dbReference>
<dbReference type="PROSITE" id="PS51713">
    <property type="entry name" value="G_ERA"/>
    <property type="match status" value="1"/>
</dbReference>
<dbReference type="PROSITE" id="PS50823">
    <property type="entry name" value="KH_TYPE_2"/>
    <property type="match status" value="1"/>
</dbReference>
<gene>
    <name evidence="1" type="primary">era</name>
    <name type="ordered locus">SFV_2629</name>
</gene>
<sequence length="301" mass="33757">MSIDKSYCGFIAIVGRPNVGKSTLLNKLLGQKISITSRKAQTTRHRIVGIHTEGAYQAIYVDTPGLHMEEKRAINRLMNKAASSSIGDVELVIFVVEGTRWTPDDEMVLNKLREGKAPVILAVNKVDNVQEKADLLPHLQFLASQMNFLDIVPISAETGLNVDTIAAIVRKHLPEATHHFPEDYITDCSQRFMASEIIREKLMRFLGAELPYSVTVEIERFVSNERGGYDINGLILVEREGQKKMVIGNKGAKIKTIGIEARKDMQEMFEAPVHLELWVKVKSGWADDERALRSLGYVDDL</sequence>
<accession>Q0T1T9</accession>